<proteinExistence type="inferred from homology"/>
<sequence length="394" mass="45611">MLWKLLRLFIIIKLIQLAIIYFSPCQFDTSSELIIQNLSSTSSSKSYYNVIITTILNKLIVWDSVYFNDLFINPIQFEHQFVFCPGWIQLIKLLNIKNYYTAQLTSILISNLCHFASVITLYYLTNEMDMKFGLVSGLLMIISPAGVFLTGNYSENLSNLLTLLMFLTYYKSINFNDVKQPSNKSITNILGYIISGIFCAINFTVRANGLLLGVIYVFDLYHFIQNKSSSQIILSIITGSILFMTFLMTNIYHYIKFCPGREWCNNTFPSLFQFAQHHYWNVGFLKYWTPNNIPNFILVLPVLIFNIYSLGYMYQELPKNRKLLPLIVINGLIVVGGTFFWNIQILNRITSFSPLIYWTLAYNLKKPWAKYAIGYCIVWNFVQTGLFAAFLPPA</sequence>
<gene>
    <name type="primary">GPI18</name>
    <name type="ordered locus">CAALFM_C104280CA</name>
    <name type="ORF">CaO19.1063</name>
    <name type="ORF">CaO19.8665</name>
</gene>
<dbReference type="EC" id="2.4.1.-"/>
<dbReference type="EMBL" id="CP017623">
    <property type="protein sequence ID" value="AOW26102.1"/>
    <property type="molecule type" value="Genomic_DNA"/>
</dbReference>
<dbReference type="RefSeq" id="XP_713667.1">
    <property type="nucleotide sequence ID" value="XM_708574.1"/>
</dbReference>
<dbReference type="FunCoup" id="Q59VN0">
    <property type="interactions" value="302"/>
</dbReference>
<dbReference type="STRING" id="237561.Q59VN0"/>
<dbReference type="CAZy" id="GT76">
    <property type="family name" value="Glycosyltransferase Family 76"/>
</dbReference>
<dbReference type="EnsemblFungi" id="C1_04280C_A-T">
    <property type="protein sequence ID" value="C1_04280C_A-T-p1"/>
    <property type="gene ID" value="C1_04280C_A"/>
</dbReference>
<dbReference type="GeneID" id="3644709"/>
<dbReference type="KEGG" id="cal:CAALFM_C104280CA"/>
<dbReference type="CGD" id="CAL0000178044">
    <property type="gene designation" value="orf19.8665"/>
</dbReference>
<dbReference type="VEuPathDB" id="FungiDB:C1_04280C_A"/>
<dbReference type="eggNOG" id="KOG2647">
    <property type="taxonomic scope" value="Eukaryota"/>
</dbReference>
<dbReference type="HOGENOM" id="CLU_029048_0_0_1"/>
<dbReference type="InParanoid" id="Q59VN0"/>
<dbReference type="OMA" id="GALFIWC"/>
<dbReference type="OrthoDB" id="10252502at2759"/>
<dbReference type="UniPathway" id="UPA00196"/>
<dbReference type="PRO" id="PR:Q59VN0"/>
<dbReference type="Proteomes" id="UP000000559">
    <property type="component" value="Chromosome 1"/>
</dbReference>
<dbReference type="GO" id="GO:0005789">
    <property type="term" value="C:endoplasmic reticulum membrane"/>
    <property type="evidence" value="ECO:0000318"/>
    <property type="project" value="GO_Central"/>
</dbReference>
<dbReference type="GO" id="GO:0120097">
    <property type="term" value="C:glycosylphosphatidylinositol-mannosyltransferase II complex"/>
    <property type="evidence" value="ECO:0007669"/>
    <property type="project" value="EnsemblFungi"/>
</dbReference>
<dbReference type="GO" id="GO:0031501">
    <property type="term" value="C:mannosyltransferase complex"/>
    <property type="evidence" value="ECO:0000318"/>
    <property type="project" value="GO_Central"/>
</dbReference>
<dbReference type="GO" id="GO:0000009">
    <property type="term" value="F:alpha-1,6-mannosyltransferase activity"/>
    <property type="evidence" value="ECO:0007669"/>
    <property type="project" value="EnsemblFungi"/>
</dbReference>
<dbReference type="GO" id="GO:0004376">
    <property type="term" value="F:glycolipid mannosyltransferase activity"/>
    <property type="evidence" value="ECO:0007669"/>
    <property type="project" value="InterPro"/>
</dbReference>
<dbReference type="GO" id="GO:0000030">
    <property type="term" value="F:mannosyltransferase activity"/>
    <property type="evidence" value="ECO:0000318"/>
    <property type="project" value="GO_Central"/>
</dbReference>
<dbReference type="GO" id="GO:0006506">
    <property type="term" value="P:GPI anchor biosynthetic process"/>
    <property type="evidence" value="ECO:0000318"/>
    <property type="project" value="GO_Central"/>
</dbReference>
<dbReference type="InterPro" id="IPR007315">
    <property type="entry name" value="PIG-V/Gpi18"/>
</dbReference>
<dbReference type="PANTHER" id="PTHR12468">
    <property type="entry name" value="GPI MANNOSYLTRANSFERASE 2"/>
    <property type="match status" value="1"/>
</dbReference>
<dbReference type="PANTHER" id="PTHR12468:SF2">
    <property type="entry name" value="GPI MANNOSYLTRANSFERASE 2"/>
    <property type="match status" value="1"/>
</dbReference>
<dbReference type="Pfam" id="PF04188">
    <property type="entry name" value="Mannosyl_trans2"/>
    <property type="match status" value="1"/>
</dbReference>
<comment type="function">
    <text evidence="1">Mannosyltransferase involved in glycosylphosphatidylinositol-anchor biosynthesis. Transfers the second mannose to the glycosylphosphatidylinositol during GPI precursor assembly (By similarity).</text>
</comment>
<comment type="pathway">
    <text>Glycolipid biosynthesis; glycosylphosphatidylinositol-anchor biosynthesis.</text>
</comment>
<comment type="subcellular location">
    <subcellularLocation>
        <location evidence="1">Endoplasmic reticulum membrane</location>
        <topology evidence="1">Multi-pass membrane protein</topology>
    </subcellularLocation>
</comment>
<comment type="similarity">
    <text evidence="3">Belongs to the PIGV family.</text>
</comment>
<protein>
    <recommendedName>
        <fullName>GPI mannosyltransferase 2</fullName>
        <ecNumber>2.4.1.-</ecNumber>
    </recommendedName>
    <alternativeName>
        <fullName>GPI mannosyltransferase II</fullName>
        <shortName>GPI-MT-II</shortName>
    </alternativeName>
    <alternativeName>
        <fullName>Glycosylphosphatidylinositol-anchor biosynthesis protein 18</fullName>
    </alternativeName>
</protein>
<keyword id="KW-0256">Endoplasmic reticulum</keyword>
<keyword id="KW-0328">Glycosyltransferase</keyword>
<keyword id="KW-0337">GPI-anchor biosynthesis</keyword>
<keyword id="KW-0472">Membrane</keyword>
<keyword id="KW-1185">Reference proteome</keyword>
<keyword id="KW-0808">Transferase</keyword>
<keyword id="KW-0812">Transmembrane</keyword>
<keyword id="KW-1133">Transmembrane helix</keyword>
<name>GPI18_CANAL</name>
<feature type="chain" id="PRO_0000246242" description="GPI mannosyltransferase 2">
    <location>
        <begin position="1"/>
        <end position="394"/>
    </location>
</feature>
<feature type="transmembrane region" description="Helical" evidence="2">
    <location>
        <begin position="2"/>
        <end position="22"/>
    </location>
</feature>
<feature type="transmembrane region" description="Helical" evidence="2">
    <location>
        <begin position="47"/>
        <end position="67"/>
    </location>
</feature>
<feature type="transmembrane region" description="Helical" evidence="2">
    <location>
        <begin position="104"/>
        <end position="124"/>
    </location>
</feature>
<feature type="transmembrane region" description="Helical" evidence="2">
    <location>
        <begin position="132"/>
        <end position="152"/>
    </location>
</feature>
<feature type="transmembrane region" description="Helical" evidence="2">
    <location>
        <begin position="185"/>
        <end position="205"/>
    </location>
</feature>
<feature type="transmembrane region" description="Helical" evidence="2">
    <location>
        <begin position="232"/>
        <end position="252"/>
    </location>
</feature>
<feature type="transmembrane region" description="Helical" evidence="2">
    <location>
        <begin position="293"/>
        <end position="313"/>
    </location>
</feature>
<feature type="transmembrane region" description="Helical" evidence="2">
    <location>
        <begin position="323"/>
        <end position="343"/>
    </location>
</feature>
<feature type="transmembrane region" description="Helical" evidence="2">
    <location>
        <begin position="371"/>
        <end position="391"/>
    </location>
</feature>
<accession>Q59VN0</accession>
<accession>A0A1D8PD87</accession>
<evidence type="ECO:0000250" key="1"/>
<evidence type="ECO:0000255" key="2"/>
<evidence type="ECO:0000305" key="3"/>
<organism>
    <name type="scientific">Candida albicans (strain SC5314 / ATCC MYA-2876)</name>
    <name type="common">Yeast</name>
    <dbReference type="NCBI Taxonomy" id="237561"/>
    <lineage>
        <taxon>Eukaryota</taxon>
        <taxon>Fungi</taxon>
        <taxon>Dikarya</taxon>
        <taxon>Ascomycota</taxon>
        <taxon>Saccharomycotina</taxon>
        <taxon>Pichiomycetes</taxon>
        <taxon>Debaryomycetaceae</taxon>
        <taxon>Candida/Lodderomyces clade</taxon>
        <taxon>Candida</taxon>
    </lineage>
</organism>
<reference key="1">
    <citation type="journal article" date="2004" name="Proc. Natl. Acad. Sci. U.S.A.">
        <title>The diploid genome sequence of Candida albicans.</title>
        <authorList>
            <person name="Jones T."/>
            <person name="Federspiel N.A."/>
            <person name="Chibana H."/>
            <person name="Dungan J."/>
            <person name="Kalman S."/>
            <person name="Magee B.B."/>
            <person name="Newport G."/>
            <person name="Thorstenson Y.R."/>
            <person name="Agabian N."/>
            <person name="Magee P.T."/>
            <person name="Davis R.W."/>
            <person name="Scherer S."/>
        </authorList>
    </citation>
    <scope>NUCLEOTIDE SEQUENCE [LARGE SCALE GENOMIC DNA]</scope>
    <source>
        <strain>SC5314 / ATCC MYA-2876</strain>
    </source>
</reference>
<reference key="2">
    <citation type="journal article" date="2007" name="Genome Biol.">
        <title>Assembly of the Candida albicans genome into sixteen supercontigs aligned on the eight chromosomes.</title>
        <authorList>
            <person name="van het Hoog M."/>
            <person name="Rast T.J."/>
            <person name="Martchenko M."/>
            <person name="Grindle S."/>
            <person name="Dignard D."/>
            <person name="Hogues H."/>
            <person name="Cuomo C."/>
            <person name="Berriman M."/>
            <person name="Scherer S."/>
            <person name="Magee B.B."/>
            <person name="Whiteway M."/>
            <person name="Chibana H."/>
            <person name="Nantel A."/>
            <person name="Magee P.T."/>
        </authorList>
    </citation>
    <scope>GENOME REANNOTATION</scope>
    <source>
        <strain>SC5314 / ATCC MYA-2876</strain>
    </source>
</reference>
<reference key="3">
    <citation type="journal article" date="2013" name="Genome Biol.">
        <title>Assembly of a phased diploid Candida albicans genome facilitates allele-specific measurements and provides a simple model for repeat and indel structure.</title>
        <authorList>
            <person name="Muzzey D."/>
            <person name="Schwartz K."/>
            <person name="Weissman J.S."/>
            <person name="Sherlock G."/>
        </authorList>
    </citation>
    <scope>NUCLEOTIDE SEQUENCE [LARGE SCALE GENOMIC DNA]</scope>
    <scope>GENOME REANNOTATION</scope>
    <source>
        <strain>SC5314 / ATCC MYA-2876</strain>
    </source>
</reference>